<sequence length="144" mass="16539">MKNFALAILVVTFVVAVFGNTNLDPPTRPTRLRREAEPEAEPGNNRPVYIPQPRPPHPRLRREAEPEAEPGNNRPVYIPQPRPPHPRLRREAEPEAEPGNNRPVYIPQPRPPHPRLRREAEPEAEPGNNRPVYIPQPRPPHPRI</sequence>
<proteinExistence type="evidence at protein level"/>
<feature type="signal peptide" evidence="1">
    <location>
        <begin position="1"/>
        <end position="19"/>
    </location>
</feature>
<feature type="propeptide" id="PRO_0000004920" evidence="3">
    <location>
        <begin position="20"/>
        <end position="42"/>
    </location>
</feature>
<feature type="peptide" id="PRO_0000004921" description="Apidaecin-1B">
    <location>
        <begin position="43"/>
        <end position="60"/>
    </location>
</feature>
<feature type="propeptide" id="PRO_0000004922" evidence="3">
    <location>
        <begin position="63"/>
        <end position="70"/>
    </location>
</feature>
<feature type="peptide" id="PRO_0000004923" description="Apidaecin-1B">
    <location>
        <begin position="71"/>
        <end position="88"/>
    </location>
</feature>
<feature type="propeptide" id="PRO_0000004924" evidence="3">
    <location>
        <begin position="91"/>
        <end position="98"/>
    </location>
</feature>
<feature type="peptide" id="PRO_0000004925" description="Apidaecin-1B">
    <location>
        <begin position="99"/>
        <end position="116"/>
    </location>
</feature>
<feature type="propeptide" id="PRO_0000004926" evidence="3">
    <location>
        <begin position="119"/>
        <end position="126"/>
    </location>
</feature>
<feature type="peptide" id="PRO_0000004927" description="Apidaecin-1A">
    <location>
        <begin position="127"/>
        <end position="144"/>
    </location>
</feature>
<feature type="region of interest" description="Disordered" evidence="2">
    <location>
        <begin position="20"/>
        <end position="144"/>
    </location>
</feature>
<feature type="compositionally biased region" description="Pro residues" evidence="2">
    <location>
        <begin position="134"/>
        <end position="144"/>
    </location>
</feature>
<evidence type="ECO:0000255" key="1"/>
<evidence type="ECO:0000256" key="2">
    <source>
        <dbReference type="SAM" id="MobiDB-lite"/>
    </source>
</evidence>
<evidence type="ECO:0000269" key="3">
    <source>
    </source>
</evidence>
<evidence type="ECO:0000269" key="4">
    <source>
    </source>
</evidence>
<evidence type="ECO:0000303" key="5">
    <source>
    </source>
</evidence>
<evidence type="ECO:0000303" key="6">
    <source>
    </source>
</evidence>
<evidence type="ECO:0000305" key="7"/>
<name>APD22_APIME</name>
<reference key="1">
    <citation type="journal article" date="1993" name="EMBO J.">
        <title>Apidaecin multipeptide precursor structure: a putative mechanism for amplification of the insect antibacterial response.</title>
        <authorList>
            <person name="Casteels-Josson K."/>
            <person name="Capaci T."/>
            <person name="Casteels P."/>
            <person name="Tempst P."/>
        </authorList>
    </citation>
    <scope>NUCLEOTIDE SEQUENCE [MRNA]</scope>
</reference>
<reference key="2">
    <citation type="journal article" date="1989" name="EMBO J.">
        <title>Apidaecins: antibacterial peptides from honeybees.</title>
        <authorList>
            <person name="Casteels P."/>
            <person name="Ampe C."/>
            <person name="Jacobs F."/>
            <person name="Vaeck M."/>
            <person name="Tempst P."/>
        </authorList>
    </citation>
    <scope>PROTEIN SEQUENCE OF 43-60; 71-88; 99-116 AND 127-144</scope>
    <scope>SUBCELLULAR LOCATION</scope>
    <source>
        <tissue evidence="5">Hemolymph</tissue>
    </source>
</reference>
<reference key="3">
    <citation type="journal article" date="1994" name="J. Biol. Chem.">
        <title>Biodiversity of apidaecin-type peptide antibiotics. Prospects of manipulating the antibacterial spectrum and combating acquired resistance.</title>
        <authorList>
            <person name="Casteels P."/>
            <person name="Romagnolo J."/>
            <person name="Castle M."/>
            <person name="Casteels-Josson K."/>
            <person name="Erdjument-Bromage H."/>
            <person name="Tempst P."/>
        </authorList>
    </citation>
    <scope>FUNCTION OF APIDAECIN-1B</scope>
    <scope>SUBCELLULAR LOCATION</scope>
    <scope>MASS SPECTROMETRY</scope>
    <source>
        <tissue evidence="6">Hemolymph</tissue>
    </source>
</reference>
<accession>P35581</accession>
<accession>P11525</accession>
<accession>P11526</accession>
<protein>
    <recommendedName>
        <fullName>Apidaecins type 22</fullName>
    </recommendedName>
    <component>
        <recommendedName>
            <fullName>Apidaecin-1B</fullName>
        </recommendedName>
        <alternativeName>
            <fullName>Apidaecin IB</fullName>
        </alternativeName>
    </component>
    <component>
        <recommendedName>
            <fullName>Apidaecin-1A</fullName>
        </recommendedName>
        <alternativeName>
            <fullName>Apidaecin IA</fullName>
        </alternativeName>
    </component>
</protein>
<organism>
    <name type="scientific">Apis mellifera</name>
    <name type="common">Honeybee</name>
    <dbReference type="NCBI Taxonomy" id="7460"/>
    <lineage>
        <taxon>Eukaryota</taxon>
        <taxon>Metazoa</taxon>
        <taxon>Ecdysozoa</taxon>
        <taxon>Arthropoda</taxon>
        <taxon>Hexapoda</taxon>
        <taxon>Insecta</taxon>
        <taxon>Pterygota</taxon>
        <taxon>Neoptera</taxon>
        <taxon>Endopterygota</taxon>
        <taxon>Hymenoptera</taxon>
        <taxon>Apocrita</taxon>
        <taxon>Aculeata</taxon>
        <taxon>Apoidea</taxon>
        <taxon>Anthophila</taxon>
        <taxon>Apidae</taxon>
        <taxon>Apis</taxon>
    </lineage>
</organism>
<keyword id="KW-0002">3D-structure</keyword>
<keyword id="KW-0044">Antibiotic</keyword>
<keyword id="KW-0929">Antimicrobial</keyword>
<keyword id="KW-0165">Cleavage on pair of basic residues</keyword>
<keyword id="KW-0903">Direct protein sequencing</keyword>
<keyword id="KW-0391">Immunity</keyword>
<keyword id="KW-0399">Innate immunity</keyword>
<keyword id="KW-1185">Reference proteome</keyword>
<keyword id="KW-0677">Repeat</keyword>
<keyword id="KW-0964">Secreted</keyword>
<keyword id="KW-0732">Signal</keyword>
<comment type="function">
    <text evidence="3 4">Apidaecins have bactericidal activity; predominantly against Gram-negative bacteria (PubMed:2676519, PubMed:7929322). They seem to interfere with cell propagation (PubMed:2676519).</text>
</comment>
<comment type="subcellular location">
    <subcellularLocation>
        <location evidence="3 4">Secreted</location>
    </subcellularLocation>
</comment>
<comment type="mass spectrometry" mass="2110.0" method="MALDI" evidence="4">
    <molecule>Apidaecin-1B</molecule>
    <text>Apidaecin-1B.</text>
</comment>
<comment type="similarity">
    <text evidence="7">Belongs to the apidaecin family.</text>
</comment>
<dbReference type="EMBL" id="X72576">
    <property type="protein sequence ID" value="CAA51168.1"/>
    <property type="molecule type" value="mRNA"/>
</dbReference>
<dbReference type="PIR" id="S35331">
    <property type="entry name" value="S35331"/>
</dbReference>
<dbReference type="RefSeq" id="NP_001011642.1">
    <property type="nucleotide sequence ID" value="NM_001011642.1"/>
</dbReference>
<dbReference type="PDB" id="9D7S">
    <property type="method" value="X-ray"/>
    <property type="resolution" value="2.85 A"/>
    <property type="chains" value="1z/2z=99-116"/>
</dbReference>
<dbReference type="PDB" id="9HA1">
    <property type="method" value="EM"/>
    <property type="resolution" value="4.17 A"/>
    <property type="chains" value="y=100-116"/>
</dbReference>
<dbReference type="PDB" id="9HA2">
    <property type="method" value="EM"/>
    <property type="resolution" value="4.17 A"/>
    <property type="chains" value="y=100-116"/>
</dbReference>
<dbReference type="PDB" id="9HA3">
    <property type="method" value="EM"/>
    <property type="resolution" value="3.62 A"/>
    <property type="chains" value="y=100-116"/>
</dbReference>
<dbReference type="PDB" id="9HA4">
    <property type="method" value="EM"/>
    <property type="resolution" value="4.26 A"/>
    <property type="chains" value="y=100-116"/>
</dbReference>
<dbReference type="PDB" id="9HA5">
    <property type="method" value="EM"/>
    <property type="resolution" value="3.30 A"/>
    <property type="chains" value="y=100-116"/>
</dbReference>
<dbReference type="PDB" id="9HA6">
    <property type="method" value="EM"/>
    <property type="resolution" value="3.08 A"/>
    <property type="chains" value="y/z=100-116"/>
</dbReference>
<dbReference type="PDB" id="9HA7">
    <property type="method" value="EM"/>
    <property type="resolution" value="4.37 A"/>
    <property type="chains" value="y=100-116"/>
</dbReference>
<dbReference type="PDB" id="9HAI">
    <property type="method" value="EM"/>
    <property type="resolution" value="3.01 A"/>
    <property type="chains" value="y=100-116"/>
</dbReference>
<dbReference type="PDBsum" id="9D7S"/>
<dbReference type="PDBsum" id="9HA1"/>
<dbReference type="PDBsum" id="9HA2"/>
<dbReference type="PDBsum" id="9HA3"/>
<dbReference type="PDBsum" id="9HA4"/>
<dbReference type="PDBsum" id="9HA5"/>
<dbReference type="PDBsum" id="9HA6"/>
<dbReference type="PDBsum" id="9HA7"/>
<dbReference type="PDBsum" id="9HAI"/>
<dbReference type="EMDB" id="EMD-51973"/>
<dbReference type="EMDB" id="EMD-51974"/>
<dbReference type="EMDB" id="EMD-51975"/>
<dbReference type="EMDB" id="EMD-51976"/>
<dbReference type="EMDB" id="EMD-51977"/>
<dbReference type="EMDB" id="EMD-51978"/>
<dbReference type="EMDB" id="EMD-51979"/>
<dbReference type="EMDB" id="EMD-51981"/>
<dbReference type="SMR" id="P35581"/>
<dbReference type="STRING" id="7460.P35581"/>
<dbReference type="GeneID" id="406140"/>
<dbReference type="InParanoid" id="P35581"/>
<dbReference type="Proteomes" id="UP000005203">
    <property type="component" value="Unplaced"/>
</dbReference>
<dbReference type="GO" id="GO:0005576">
    <property type="term" value="C:extracellular region"/>
    <property type="evidence" value="ECO:0007669"/>
    <property type="project" value="UniProtKB-SubCell"/>
</dbReference>
<dbReference type="GO" id="GO:0042742">
    <property type="term" value="P:defense response to bacterium"/>
    <property type="evidence" value="ECO:0007669"/>
    <property type="project" value="UniProtKB-KW"/>
</dbReference>
<dbReference type="GO" id="GO:0045087">
    <property type="term" value="P:innate immune response"/>
    <property type="evidence" value="ECO:0007669"/>
    <property type="project" value="UniProtKB-KW"/>
</dbReference>
<dbReference type="InterPro" id="IPR004828">
    <property type="entry name" value="Apidaecin"/>
</dbReference>
<dbReference type="Pfam" id="PF00807">
    <property type="entry name" value="Apidaecin"/>
    <property type="match status" value="4"/>
</dbReference>
<dbReference type="PRINTS" id="PR01217">
    <property type="entry name" value="PRICHEXTENSN"/>
</dbReference>